<feature type="chain" id="PRO_0000364171" description="Eukaryotic translation initiation factor 3 subunit D">
    <location>
        <begin position="1"/>
        <end position="583"/>
    </location>
</feature>
<feature type="region of interest" description="Disordered" evidence="3">
    <location>
        <begin position="116"/>
        <end position="150"/>
    </location>
</feature>
<feature type="region of interest" description="RNA gate" evidence="1">
    <location>
        <begin position="298"/>
        <end position="312"/>
    </location>
</feature>
<feature type="region of interest" description="Disordered" evidence="3">
    <location>
        <begin position="561"/>
        <end position="583"/>
    </location>
</feature>
<feature type="compositionally biased region" description="Basic and acidic residues" evidence="3">
    <location>
        <begin position="140"/>
        <end position="149"/>
    </location>
</feature>
<feature type="compositionally biased region" description="Acidic residues" evidence="3">
    <location>
        <begin position="563"/>
        <end position="583"/>
    </location>
</feature>
<sequence length="583" mass="64888">MAPISIADIVAALPAEDTWGPATSTDNMLQGVPYAPFSKGDKLGRMADWTSESKDQRTGRQAYNRNFRDQQVYGAGSSNLFSIQAAEDESSFSVVDNTRTSAKRTFGRGGGTVFRGRAQRGAGQRGGRAGFQRVGAGRGQGDRFYDNRGGRSNRGRRFGWKDYDKPQRTREPSVNVRPDWTMLEEVDFSRLLKLNLETPDGEDVDSYGFLYYYDRSYDKAPVKGAERRLQSLDRAAYNVTTSQDPVIQELAEKDAATVFATSDILSMLMCAPRSVYSWDIVIVHQGNKIYFDKREGASLDLVTVNENAIDAPLELAESSAKQESINTPSALAMEATFINHNFALQTVAESQDAKVDMKNANPFYNASEETEPLASKAYKYRRFDLSLERDEEPLNMVVRTEVDALLKNPVNGEDQQLIVKALNEFDSKAQGSGNALDWRSKLWSQRGAVVATEMKNNSLKLARWTTQAVLAKADGMKLGFVSRANPRSAAGHVVLGVVGYKPRDLAAQMNLNLGNGWGIVRTIVDRIRALDAEEDEEKVKKYVLIKDPNRPVLRLYSVPANTFEEDEEAAAEEEEQKAEEDEE</sequence>
<organism>
    <name type="scientific">Aspergillus oryzae (strain ATCC 42149 / RIB 40)</name>
    <name type="common">Yellow koji mold</name>
    <dbReference type="NCBI Taxonomy" id="510516"/>
    <lineage>
        <taxon>Eukaryota</taxon>
        <taxon>Fungi</taxon>
        <taxon>Dikarya</taxon>
        <taxon>Ascomycota</taxon>
        <taxon>Pezizomycotina</taxon>
        <taxon>Eurotiomycetes</taxon>
        <taxon>Eurotiomycetidae</taxon>
        <taxon>Eurotiales</taxon>
        <taxon>Aspergillaceae</taxon>
        <taxon>Aspergillus</taxon>
        <taxon>Aspergillus subgen. Circumdati</taxon>
    </lineage>
</organism>
<proteinExistence type="inferred from homology"/>
<gene>
    <name type="ORF">AO090026000811</name>
</gene>
<dbReference type="EMBL" id="BA000051">
    <property type="protein sequence ID" value="BAE60211.1"/>
    <property type="molecule type" value="Genomic_DNA"/>
</dbReference>
<dbReference type="RefSeq" id="XP_001822213.1">
    <property type="nucleotide sequence ID" value="XM_001822161.3"/>
</dbReference>
<dbReference type="SMR" id="Q2UE04"/>
<dbReference type="STRING" id="510516.Q2UE04"/>
<dbReference type="EnsemblFungi" id="BAE60211">
    <property type="protein sequence ID" value="BAE60211"/>
    <property type="gene ID" value="AO090026000811"/>
</dbReference>
<dbReference type="GeneID" id="5994241"/>
<dbReference type="KEGG" id="aor:AO090026000811"/>
<dbReference type="VEuPathDB" id="FungiDB:AO090026000811"/>
<dbReference type="HOGENOM" id="CLU_024521_2_0_1"/>
<dbReference type="OMA" id="FMDKRDN"/>
<dbReference type="OrthoDB" id="110657at5052"/>
<dbReference type="Proteomes" id="UP000006564">
    <property type="component" value="Chromosome 3"/>
</dbReference>
<dbReference type="GO" id="GO:0005829">
    <property type="term" value="C:cytosol"/>
    <property type="evidence" value="ECO:0007669"/>
    <property type="project" value="EnsemblFungi"/>
</dbReference>
<dbReference type="GO" id="GO:0016282">
    <property type="term" value="C:eukaryotic 43S preinitiation complex"/>
    <property type="evidence" value="ECO:0007669"/>
    <property type="project" value="UniProtKB-UniRule"/>
</dbReference>
<dbReference type="GO" id="GO:0033290">
    <property type="term" value="C:eukaryotic 48S preinitiation complex"/>
    <property type="evidence" value="ECO:0007669"/>
    <property type="project" value="UniProtKB-UniRule"/>
</dbReference>
<dbReference type="GO" id="GO:0071540">
    <property type="term" value="C:eukaryotic translation initiation factor 3 complex, eIF3e"/>
    <property type="evidence" value="ECO:0007669"/>
    <property type="project" value="EnsemblFungi"/>
</dbReference>
<dbReference type="GO" id="GO:0071541">
    <property type="term" value="C:eukaryotic translation initiation factor 3 complex, eIF3m"/>
    <property type="evidence" value="ECO:0007669"/>
    <property type="project" value="EnsemblFungi"/>
</dbReference>
<dbReference type="GO" id="GO:0098808">
    <property type="term" value="F:mRNA cap binding"/>
    <property type="evidence" value="ECO:0007669"/>
    <property type="project" value="UniProtKB-UniRule"/>
</dbReference>
<dbReference type="GO" id="GO:0003743">
    <property type="term" value="F:translation initiation factor activity"/>
    <property type="evidence" value="ECO:0007669"/>
    <property type="project" value="UniProtKB-UniRule"/>
</dbReference>
<dbReference type="GO" id="GO:0002191">
    <property type="term" value="P:cap-dependent translational initiation"/>
    <property type="evidence" value="ECO:0007669"/>
    <property type="project" value="UniProtKB-UniRule"/>
</dbReference>
<dbReference type="GO" id="GO:0001732">
    <property type="term" value="P:formation of cytoplasmic translation initiation complex"/>
    <property type="evidence" value="ECO:0007669"/>
    <property type="project" value="UniProtKB-UniRule"/>
</dbReference>
<dbReference type="HAMAP" id="MF_03003">
    <property type="entry name" value="eIF3d"/>
    <property type="match status" value="1"/>
</dbReference>
<dbReference type="InterPro" id="IPR007783">
    <property type="entry name" value="eIF3d"/>
</dbReference>
<dbReference type="PANTHER" id="PTHR12399">
    <property type="entry name" value="EUKARYOTIC TRANSLATION INITIATION FACTOR 3 SUBUNIT 7"/>
    <property type="match status" value="1"/>
</dbReference>
<dbReference type="PANTHER" id="PTHR12399:SF0">
    <property type="entry name" value="EUKARYOTIC TRANSLATION INITIATION FACTOR 3 SUBUNIT D"/>
    <property type="match status" value="1"/>
</dbReference>
<dbReference type="Pfam" id="PF05091">
    <property type="entry name" value="eIF-3_zeta"/>
    <property type="match status" value="1"/>
</dbReference>
<dbReference type="PIRSF" id="PIRSF016281">
    <property type="entry name" value="EIF-3_zeta"/>
    <property type="match status" value="1"/>
</dbReference>
<evidence type="ECO:0000250" key="1">
    <source>
        <dbReference type="UniProtKB" id="K7IM66"/>
    </source>
</evidence>
<evidence type="ECO:0000255" key="2">
    <source>
        <dbReference type="HAMAP-Rule" id="MF_03003"/>
    </source>
</evidence>
<evidence type="ECO:0000256" key="3">
    <source>
        <dbReference type="SAM" id="MobiDB-lite"/>
    </source>
</evidence>
<protein>
    <recommendedName>
        <fullName evidence="2">Eukaryotic translation initiation factor 3 subunit D</fullName>
        <shortName evidence="2">eIF3d</shortName>
    </recommendedName>
</protein>
<accession>Q2UE04</accession>
<name>EIF3D_ASPOR</name>
<reference key="1">
    <citation type="journal article" date="2005" name="Nature">
        <title>Genome sequencing and analysis of Aspergillus oryzae.</title>
        <authorList>
            <person name="Machida M."/>
            <person name="Asai K."/>
            <person name="Sano M."/>
            <person name="Tanaka T."/>
            <person name="Kumagai T."/>
            <person name="Terai G."/>
            <person name="Kusumoto K."/>
            <person name="Arima T."/>
            <person name="Akita O."/>
            <person name="Kashiwagi Y."/>
            <person name="Abe K."/>
            <person name="Gomi K."/>
            <person name="Horiuchi H."/>
            <person name="Kitamoto K."/>
            <person name="Kobayashi T."/>
            <person name="Takeuchi M."/>
            <person name="Denning D.W."/>
            <person name="Galagan J.E."/>
            <person name="Nierman W.C."/>
            <person name="Yu J."/>
            <person name="Archer D.B."/>
            <person name="Bennett J.W."/>
            <person name="Bhatnagar D."/>
            <person name="Cleveland T.E."/>
            <person name="Fedorova N.D."/>
            <person name="Gotoh O."/>
            <person name="Horikawa H."/>
            <person name="Hosoyama A."/>
            <person name="Ichinomiya M."/>
            <person name="Igarashi R."/>
            <person name="Iwashita K."/>
            <person name="Juvvadi P.R."/>
            <person name="Kato M."/>
            <person name="Kato Y."/>
            <person name="Kin T."/>
            <person name="Kokubun A."/>
            <person name="Maeda H."/>
            <person name="Maeyama N."/>
            <person name="Maruyama J."/>
            <person name="Nagasaki H."/>
            <person name="Nakajima T."/>
            <person name="Oda K."/>
            <person name="Okada K."/>
            <person name="Paulsen I."/>
            <person name="Sakamoto K."/>
            <person name="Sawano T."/>
            <person name="Takahashi M."/>
            <person name="Takase K."/>
            <person name="Terabayashi Y."/>
            <person name="Wortman J.R."/>
            <person name="Yamada O."/>
            <person name="Yamagata Y."/>
            <person name="Anazawa H."/>
            <person name="Hata Y."/>
            <person name="Koide Y."/>
            <person name="Komori T."/>
            <person name="Koyama Y."/>
            <person name="Minetoki T."/>
            <person name="Suharnan S."/>
            <person name="Tanaka A."/>
            <person name="Isono K."/>
            <person name="Kuhara S."/>
            <person name="Ogasawara N."/>
            <person name="Kikuchi H."/>
        </authorList>
    </citation>
    <scope>NUCLEOTIDE SEQUENCE [LARGE SCALE GENOMIC DNA]</scope>
    <source>
        <strain>ATCC 42149 / RIB 40</strain>
    </source>
</reference>
<comment type="function">
    <text evidence="2">mRNA cap-binding component of the eukaryotic translation initiation factor 3 (eIF-3) complex, which is involved in protein synthesis of a specialized repertoire of mRNAs and, together with other initiation factors, stimulates binding of mRNA and methionyl-tRNAi to the 40S ribosome. The eIF-3 complex specifically targets and initiates translation of a subset of mRNAs involved in cell proliferation. In the eIF-3 complex, eif3d specifically recognizes and binds the 7-methylguanosine cap of a subset of mRNAs.</text>
</comment>
<comment type="subunit">
    <text evidence="2">Component of the eukaryotic translation initiation factor 3 (eIF-3) complex.</text>
</comment>
<comment type="subcellular location">
    <subcellularLocation>
        <location evidence="2">Cytoplasm</location>
    </subcellularLocation>
</comment>
<comment type="domain">
    <text evidence="2">The RNA gate region regulates mRNA cap recognition to prevent promiscuous mRNA-binding before assembly of eif3d into the full eukaryotic translation initiation factor 3 (eIF-3) complex.</text>
</comment>
<comment type="similarity">
    <text evidence="2">Belongs to the eIF-3 subunit D family.</text>
</comment>
<keyword id="KW-0963">Cytoplasm</keyword>
<keyword id="KW-0396">Initiation factor</keyword>
<keyword id="KW-0648">Protein biosynthesis</keyword>
<keyword id="KW-1185">Reference proteome</keyword>
<keyword id="KW-0694">RNA-binding</keyword>